<protein>
    <recommendedName>
        <fullName evidence="17">Accessory gland-specific peptide 26Aa</fullName>
    </recommendedName>
    <alternativeName>
        <fullName evidence="16">Male accessory gland secretory protein 355A</fullName>
    </alternativeName>
    <component>
        <recommendedName>
            <fullName evidence="15">CP1-N</fullName>
        </recommendedName>
    </component>
    <component>
        <recommendedName>
            <fullName evidence="15">CP1-C</fullName>
        </recommendedName>
    </component>
    <component>
        <recommendedName>
            <fullName evidence="15">CP2-N</fullName>
        </recommendedName>
    </component>
    <component>
        <recommendedName>
            <fullName evidence="15">CP2-C</fullName>
        </recommendedName>
    </component>
    <component>
        <recommendedName>
            <fullName evidence="15">CP3-N</fullName>
        </recommendedName>
    </component>
    <component>
        <recommendedName>
            <fullName evidence="15">CP3-C</fullName>
        </recommendedName>
    </component>
</protein>
<name>MS2A_DROME</name>
<feature type="signal peptide" evidence="1">
    <location>
        <begin position="1"/>
        <end position="18"/>
    </location>
</feature>
<feature type="chain" id="PRO_0000021755" description="Accessory gland-specific peptide 26Aa">
    <location>
        <begin position="19"/>
        <end position="264"/>
    </location>
</feature>
<feature type="peptide" id="PRO_0000451070" description="CP1-N" evidence="13">
    <location>
        <begin position="19"/>
        <end position="48"/>
    </location>
</feature>
<feature type="peptide" id="PRO_0000451071" description="CP1-C" evidence="13">
    <location>
        <begin position="49"/>
        <end position="264"/>
    </location>
</feature>
<feature type="peptide" id="PRO_0000451072" description="CP2-N" evidence="13">
    <location>
        <begin position="49"/>
        <end position="67"/>
    </location>
</feature>
<feature type="peptide" id="PRO_0000451073" description="CP2-C" evidence="13">
    <location>
        <begin position="68"/>
        <end position="264"/>
    </location>
</feature>
<feature type="peptide" id="PRO_0000451074" description="CP3-N" evidence="13">
    <location>
        <begin position="68"/>
        <end position="117"/>
    </location>
</feature>
<feature type="peptide" id="PRO_0000451075" description="CP3-C" evidence="13">
    <location>
        <begin position="118"/>
        <end position="264"/>
    </location>
</feature>
<feature type="region of interest" description="Sufficient for promoting ovulation when expressed in females" evidence="5">
    <location>
        <begin position="1"/>
        <end position="138"/>
    </location>
</feature>
<feature type="region of interest" description="Disordered" evidence="2">
    <location>
        <begin position="189"/>
        <end position="219"/>
    </location>
</feature>
<feature type="region of interest" description="Necessary and sufficient for homodimerization" evidence="6 7">
    <location>
        <begin position="219"/>
        <end position="264"/>
    </location>
</feature>
<feature type="compositionally biased region" description="Basic residues" evidence="2">
    <location>
        <begin position="194"/>
        <end position="203"/>
    </location>
</feature>
<feature type="site" description="Cleavage; by Semp1" evidence="10">
    <location>
        <begin position="48"/>
        <end position="49"/>
    </location>
</feature>
<feature type="site" description="Cleavage; by Semp1" evidence="10">
    <location>
        <begin position="67"/>
        <end position="68"/>
    </location>
</feature>
<feature type="site" description="Cleavage; by Semp1" evidence="10">
    <location>
        <begin position="117"/>
        <end position="118"/>
    </location>
</feature>
<feature type="glycosylation site" description="N-linked (GlcNAc...) asparagine" evidence="1">
    <location>
        <position position="88"/>
    </location>
</feature>
<feature type="glycosylation site" description="N-linked (GlcNAc...) asparagine" evidence="1">
    <location>
        <position position="122"/>
    </location>
</feature>
<feature type="glycosylation site" description="N-linked (GlcNAc...) asparagine" evidence="1">
    <location>
        <position position="138"/>
    </location>
</feature>
<feature type="glycosylation site" description="N-linked (GlcNAc...) asparagine" evidence="1">
    <location>
        <position position="145"/>
    </location>
</feature>
<feature type="sequence variant" description="In strain: La28 and La106.">
    <original>L</original>
    <variation>S</variation>
    <location>
        <position position="5"/>
    </location>
</feature>
<feature type="sequence variant" description="In strain: La120.">
    <original>I</original>
    <variation>L</variation>
    <location>
        <position position="10"/>
    </location>
</feature>
<feature type="sequence variant" description="In strain: La14, La31, La118 and Ma24.">
    <original>L</original>
    <variation>I</variation>
    <location>
        <position position="14"/>
    </location>
</feature>
<feature type="sequence variant" description="In strain: AF1, AF4, AF6, AF8, AF9, Au1, Au3, Au7, Au9, La3, La10, La14, La15, La25, La31, La108, Ma6, Ma11, Ma18, Ma20, Ma24, Ma35, Ma37, Ma53, Ma57, Ma74, Mo13a, Mo34a, Mo47a, NC-005, NC-007, NC-010, NFS 5.3, Ny1, Ny6, Ny8, SFS 2.2, TW2, TW3, TW6, TW9 and TW10.">
    <original>S</original>
    <variation>N</variation>
    <location>
        <position position="19"/>
    </location>
</feature>
<feature type="sequence variant" description="In strain: NC-005, NC-007 and NC-010.">
    <original>Q</original>
    <variation>K</variation>
    <location>
        <position position="24"/>
    </location>
</feature>
<feature type="sequence variant" description="In strain: Au6, La25, La27, La62, La108, Ma43, Mo13a, Mo34a, NFS 5.1, NFS 5.2, NFS 5.3, NFS 6.1, NFS 7.8, Ny1, Ny2, Ny6, Ny8, SFS 1.1, SFS 1.4, SFS 2.2, SFS 3.1, SFS 3.3, SFS 3.4, TW2, TW3, TW4, TW7, TW9 and TW10.">
    <original>Q</original>
    <variation>K</variation>
    <location>
        <position position="25"/>
    </location>
</feature>
<feature type="sequence variant" description="In strain: AF2, AF7, Au4, La3, La15, La37, La58, Ma21, Mo29b, Mo36a, Mo52B, Mo79b, NC-009, Ny3, Ny5 and TW11.">
    <original>L</original>
    <variation>Q</variation>
    <location>
        <position position="32"/>
    </location>
</feature>
<feature type="sequence variant" description="In strain: Ny2 and SFS 3.4.">
    <original>S</original>
    <variation>G</variation>
    <location>
        <position position="39"/>
    </location>
</feature>
<feature type="sequence variant" description="In strain: Au3.">
    <original>A</original>
    <variation>S</variation>
    <location>
        <position position="40"/>
    </location>
</feature>
<feature type="sequence variant" description="In strain: Ma18, Ma20, Ma37 and Ma53.">
    <original>L</original>
    <variation>V</variation>
    <location>
        <position position="42"/>
    </location>
</feature>
<feature type="sequence variant" description="In strain: Au3 and Ma74.">
    <original>N</original>
    <variation>S</variation>
    <location>
        <position position="44"/>
    </location>
</feature>
<feature type="sequence variant" description="In strain: AF1, AF3, AF4, AF5, AF6, AF8, AF9, AF10, Au1, Au2, Au4, Au6, Au7, Au8, Au10, La10, La13, La14, La25, La31, La32, La37, La46, La58, La60, La62, La105, La108, La116, La118, La125, Ma3, Ma6, Ma11, Ma20, Ma23, Ma24, Ma50, Ma56, Ma57, Ma60, Mo13a, Mo29b, Mo34a, Mo40b, Mo52B, Mo80b, NC-001, NC-004, NC-005, NC-006, NC-007, NC-008, NC-010, NFS 5.1, NFS 5.2, NFS 6.1, NFS 6.2, NFS 6.3, NFS 7.8, Ny1, Ny2, Ny4, Ny6, Ny8, SFS 1.1, SFS 1.4, SFS 2.2, SFS 3.1, SFS 3.2, SFS 3.3, SFS 3.4, TW1, TW2, TW3, TW4, TW5, TW6, TW7, TW8 and TW9.">
    <original>A</original>
    <variation>P</variation>
    <location>
        <position position="46"/>
    </location>
</feature>
<feature type="sequence variant" description="In strain: AF2, AF7, Au3, Au5, Au9, La3, La15, La27, La36, La54, La120, Ma18, Ma21, Ma31, Ma37, Ma43, Ma53, Ma74, Mo36a, Mo79b, NC-002, NC-003, NC-009, NFS 5.4, NFS 6.4, Ny3, Ny5, Ny7, SFS 2.4, TW10 and TW11.">
    <original>A</original>
    <variation>T</variation>
    <location>
        <position position="46"/>
    </location>
</feature>
<feature type="sequence variant" description="In strain: La116.">
    <original>A</original>
    <variation>T</variation>
    <location>
        <position position="54"/>
    </location>
</feature>
<feature type="sequence variant" description="In strain: Au3.">
    <original>I</original>
    <variation>L</variation>
    <location>
        <position position="56"/>
    </location>
</feature>
<feature type="sequence variant" description="In strain: AF8, Ma3 and SFS 2.3.">
    <original>D</original>
    <variation>G</variation>
    <location>
        <position position="65"/>
    </location>
</feature>
<feature type="sequence variant" description="In strain: La116 and NC3.">
    <original>D</original>
    <variation>N</variation>
    <location>
        <position position="76"/>
    </location>
</feature>
<feature type="sequence variant" description="In strain: Au2, Au3, Au8, La13, La32, La37, NC-004, NC-006, NC-008, Ny4, TW1, TW5 and TW8.">
    <original>D</original>
    <variation>N</variation>
    <location>
        <position position="79"/>
    </location>
</feature>
<feature type="sequence variant" description="In strain: La108.">
    <location>
        <position position="85"/>
    </location>
</feature>
<feature type="sequence variant" description="In strain: AF1, AF2, AF3, AF5, AF6, AF7, AF8, AF9, AF10, Au3, Au4, Au6, Au7, La3, La10, La14, La15, La27, La28, La31, La36, La37, La46, La54, La58, La60, La62, La106, La116, La118, La120, La125, Ma3, Ma6, Ma11, Ma18, Ma20, Ma21, Ma23, Ma24, Ma31, Ma35, Ma37, Ma43, Ma50, Ma53, Ma56, Ma57, Ma74, Mo40b, Mo52B, NC-001, NC-002, NC-003, NC-009, NFS 5.1, NFS 5.2, NFS 6.1, NFS 6.2, NFS 6.3, NFS 7.8, Ny2, Ny3, Ny5, Ny6, SFS 1.1, SFS 1.2, SFS 1.4, SFS 2.2, SFS 2.3, SFS 2.4, SFS 3.1, SFS 3.2, SFS 3.3, SFS 3.4, TW3, TW4, TW6, TW7, TW10 and TW11.">
    <original>N</original>
    <variation>S</variation>
    <location>
        <position position="101"/>
    </location>
</feature>
<feature type="sequence variant" description="In strain: La62.">
    <original>P</original>
    <variation>R</variation>
    <location>
        <position position="104"/>
    </location>
</feature>
<feature type="sequence variant" description="In strain: AF1, AF2, AF3, AF5, AF6, AF7, AF8, AF9, AF10, Au2, Au4, Au6, Au7, Au8, La3, La10, La13, La14, La15, La27, La28, La31, La32, La37, La46, La58, La60, La62, La105, La106, La116, La118, La120, La125, Ma3, Ma6, Ma11, Ma18, Ma20, Ma21, Ma23, Ma24, Ma31, Ma35, Ma37, Ma43, Ma50, Ma53, Ma56, Ma57, Ma74, Mo40b, Mo52B, Mo80b, NC-001, NC-002, NC-004, NC-006, NC-008, NC-009, NFS 5.1, NFS 5.2, NFS 6.1, NFS 6.2, NFS 6.3, NFS 6.4, NFS 7.8, Ny2, Ny3, Ny4, Ny5, SFS 1.1, SFS 1.4, SFS 2.2, SFS 2.4, SFS 3.1, SFS 3.2, SFS 3.3, SFS 3.4, TW1, TW3, TW4, TW5, TW6, TW7, TW8, TW10 and TW11.">
    <original>L</original>
    <variation>I</variation>
    <location>
        <position position="109"/>
    </location>
</feature>
<feature type="sequence variant" description="In strain: La36, La54 and Ma20.">
    <original>L</original>
    <variation>S</variation>
    <location>
        <position position="167"/>
    </location>
</feature>
<feature type="sequence variant" description="In strain: La3, La36, La125 and Ma20.">
    <original>L</original>
    <variation>F</variation>
    <location>
        <position position="169"/>
    </location>
</feature>
<feature type="sequence variant" description="In strain: Au1, Au3 and Au9.">
    <original>E</original>
    <variation>Q</variation>
    <location>
        <position position="172"/>
    </location>
</feature>
<feature type="sequence variant" description="In strain: Au5, La10, La14, La27, La31, La36, La54, La60, La62, La105, La118, La120, La125, Ma3, Ma6, Ma11, Ma21, Ma24, Ma31, Ma35, Ma43, Ma50, Ma53, Ma56, Ma57, Ma74, Mo36a, Mo37a, Mo47a, Mo79b, NC-002, NFS 5.1, NFS 5.2, NFS 6.3, NFS 7.8, Ny2, SFS 1.1, SFS 1.2, SFS 1.4, SFS 2.3, SFS 3.1 and SFS 3.4.">
    <original>S</original>
    <variation>I</variation>
    <location>
        <position position="207"/>
    </location>
</feature>
<feature type="sequence variant" description="In strain: Ny2 and SFS 2.3.">
    <original>A</original>
    <variation>V</variation>
    <location>
        <position position="212"/>
    </location>
</feature>
<feature type="sequence variant" description="In strain: La3, La10, La15, La27, La31, La37, La60, La120, La125, Ma6, Ma18, Ma20, Ma21, Ma35, Ma37, Ma43, Mo29b, Mo34a, Mo80b, NC-002, NC-010, NFS 5.1, NFS 5.2, NFS 5.4, NFS 6.1, NFS 6.2, NFS 6.4, NFS 7.8, Ny2, SFS 1.2, SFS 1.4, SFS 2.2, SFS 2.3, SFS 3.1, SFS 3.3 and SFS 3.4.">
    <original>R</original>
    <variation>K</variation>
    <location>
        <position position="221"/>
    </location>
</feature>
<feature type="sequence variant" description="In strain: TW9.">
    <original>N</original>
    <variation>Y</variation>
    <location>
        <position position="226"/>
    </location>
</feature>
<feature type="sequence variant" description="In strain: AF6, AF8, AF9, Au4, La31, La32, La60, La125, Ma6, Ma21, Ma57, TW1 and TW11.">
    <original>E</original>
    <variation>D</variation>
    <location>
        <position position="253"/>
    </location>
</feature>
<feature type="sequence variant" description="In strain: AF5, AF10, Au5, La3, La15, La105, Mo36a, Mo37a, Mo47a, Mo79b and TW10.">
    <original>P</original>
    <variation>S</variation>
    <location>
        <position position="262"/>
    </location>
</feature>
<feature type="mutagenesis site" description="Males have no visible phenotype and are fertile. However, mated females display a decrease in the number of oocytes released by their ovary and deposit fewer eggs on day 1 after the start of mating (ASM). No effect on the number of eggs laid by mated females on day 2 to 4 ASM. No effect on female receptibility to another mate and does not affect sperm resistance to displacement by rival ejaculates." evidence="4 12">
    <location>
        <begin position="43"/>
        <end position="264"/>
    </location>
</feature>
<feature type="mutagenesis site" description="Loss of homodimerization." evidence="7">
    <original>YRNKY</original>
    <variation>ARNKA</variation>
    <location>
        <begin position="224"/>
        <end position="228"/>
    </location>
</feature>
<feature type="mutagenesis site" description="Loss of homodimerization." evidence="7">
    <original>LTLL</original>
    <variation>ATLA</variation>
    <location>
        <begin position="229"/>
        <end position="232"/>
    </location>
</feature>
<feature type="mutagenesis site" description="Loss of homodimerization." evidence="7">
    <original>SQKI</original>
    <variation>AQKA</variation>
    <location>
        <begin position="236"/>
        <end position="239"/>
    </location>
</feature>
<feature type="mutagenesis site" description="Loss of homodimerization." evidence="7">
    <original>IAKV</original>
    <variation>AAKA</variation>
    <location>
        <begin position="243"/>
        <end position="246"/>
    </location>
</feature>
<accession>P10333</accession>
<accession>O76297</accession>
<accession>O76298</accession>
<accession>O76299</accession>
<accession>Q29QG7</accession>
<accession>Q6VBG2</accession>
<accession>Q6VBG3</accession>
<accession>Q6VBG4</accession>
<accession>Q6VBG7</accession>
<accession>Q6VBG8</accession>
<accession>Q6VBG9</accession>
<accession>Q6VBH0</accession>
<accession>Q6VBH1</accession>
<accession>Q6VBH5</accession>
<accession>Q6VBH7</accession>
<accession>Q6VBH8</accession>
<accession>Q6VBH9</accession>
<accession>Q95NY9</accession>
<accession>Q95PE8</accession>
<accession>Q9TVI6</accession>
<accession>Q9TVV6</accession>
<accession>Q9TVX0</accession>
<accession>Q9TW14</accession>
<accession>Q9TW58</accession>
<accession>Q9TW61</accession>
<accession>Q9TW81</accession>
<accession>Q9UB44</accession>
<accession>Q9UB45</accession>
<accession>Q9UB46</accession>
<accession>Q9UB47</accession>
<accession>Q9UB48</accession>
<accession>Q9UB49</accession>
<accession>Q9UB50</accession>
<accession>Q9UB51</accession>
<accession>Q9UB52</accession>
<accession>Q9UB53</accession>
<accession>Q9UB54</accession>
<accession>Q9UB55</accession>
<accession>Q9UB56</accession>
<accession>Q9UB57</accession>
<accession>Q9UB58</accession>
<accession>Q9UB59</accession>
<accession>Q9UB60</accession>
<accession>Q9UB61</accession>
<accession>Q9UB62</accession>
<accession>Q9UB63</accession>
<accession>Q9UB64</accession>
<accession>Q9UB65</accession>
<accession>Q9UB66</accession>
<accession>Q9UB67</accession>
<accession>Q9UB68</accession>
<accession>Q9UB69</accession>
<accession>Q9UB70</accession>
<accession>Q9UB71</accession>
<accession>Q9UB72</accession>
<accession>Q9UB73</accession>
<accession>Q9UB74</accession>
<accession>Q9UB75</accession>
<accession>Q9UB76</accession>
<accession>Q9UB77</accession>
<accession>Q9VML6</accession>
<dbReference type="EMBL" id="Y00219">
    <property type="protein sequence ID" value="CAA68366.1"/>
    <property type="molecule type" value="Genomic_DNA"/>
</dbReference>
<dbReference type="EMBL" id="X70888">
    <property type="protein sequence ID" value="CAA50232.1"/>
    <property type="molecule type" value="Genomic_DNA"/>
</dbReference>
<dbReference type="EMBL" id="X70889">
    <property type="protein sequence ID" value="CAA50234.1"/>
    <property type="molecule type" value="Genomic_DNA"/>
</dbReference>
<dbReference type="EMBL" id="X70890">
    <property type="protein sequence ID" value="CAA50236.1"/>
    <property type="molecule type" value="Genomic_DNA"/>
</dbReference>
<dbReference type="EMBL" id="X70891">
    <property type="protein sequence ID" value="CAA50238.1"/>
    <property type="molecule type" value="Genomic_DNA"/>
</dbReference>
<dbReference type="EMBL" id="X70892">
    <property type="protein sequence ID" value="CAA50240.1"/>
    <property type="molecule type" value="Genomic_DNA"/>
</dbReference>
<dbReference type="EMBL" id="X70893">
    <property type="protein sequence ID" value="CAA50242.1"/>
    <property type="molecule type" value="Genomic_DNA"/>
</dbReference>
<dbReference type="EMBL" id="X70894">
    <property type="protein sequence ID" value="CAA50244.1"/>
    <property type="molecule type" value="Genomic_DNA"/>
</dbReference>
<dbReference type="EMBL" id="X70895">
    <property type="protein sequence ID" value="CAA50246.1"/>
    <property type="molecule type" value="Genomic_DNA"/>
</dbReference>
<dbReference type="EMBL" id="X70896">
    <property type="protein sequence ID" value="CAA50248.1"/>
    <property type="molecule type" value="Genomic_DNA"/>
</dbReference>
<dbReference type="EMBL" id="X70897">
    <property type="protein sequence ID" value="CAA50250.1"/>
    <property type="molecule type" value="Genomic_DNA"/>
</dbReference>
<dbReference type="EMBL" id="AJ231350">
    <property type="protein sequence ID" value="CAB37194.1"/>
    <property type="molecule type" value="Genomic_DNA"/>
</dbReference>
<dbReference type="EMBL" id="AJ231351">
    <property type="protein sequence ID" value="CAB37196.1"/>
    <property type="molecule type" value="Genomic_DNA"/>
</dbReference>
<dbReference type="EMBL" id="AJ231352">
    <property type="protein sequence ID" value="CAB37198.1"/>
    <property type="molecule type" value="Genomic_DNA"/>
</dbReference>
<dbReference type="EMBL" id="AJ231353">
    <property type="protein sequence ID" value="CAB37200.1"/>
    <property type="molecule type" value="Genomic_DNA"/>
</dbReference>
<dbReference type="EMBL" id="AJ231354">
    <property type="protein sequence ID" value="CAB37202.1"/>
    <property type="molecule type" value="Genomic_DNA"/>
</dbReference>
<dbReference type="EMBL" id="AJ231355">
    <property type="protein sequence ID" value="CAB37204.1"/>
    <property type="molecule type" value="Genomic_DNA"/>
</dbReference>
<dbReference type="EMBL" id="AJ231356">
    <property type="protein sequence ID" value="CAB37206.1"/>
    <property type="molecule type" value="Genomic_DNA"/>
</dbReference>
<dbReference type="EMBL" id="AJ231357">
    <property type="protein sequence ID" value="CAB37208.1"/>
    <property type="molecule type" value="Genomic_DNA"/>
</dbReference>
<dbReference type="EMBL" id="AJ231358">
    <property type="protein sequence ID" value="CAB37210.1"/>
    <property type="molecule type" value="Genomic_DNA"/>
</dbReference>
<dbReference type="EMBL" id="AJ231359">
    <property type="protein sequence ID" value="CAB37212.1"/>
    <property type="molecule type" value="Genomic_DNA"/>
</dbReference>
<dbReference type="EMBL" id="AJ231360">
    <property type="protein sequence ID" value="CAB37214.1"/>
    <property type="molecule type" value="Genomic_DNA"/>
</dbReference>
<dbReference type="EMBL" id="AJ231361">
    <property type="protein sequence ID" value="CAB37216.1"/>
    <property type="molecule type" value="Genomic_DNA"/>
</dbReference>
<dbReference type="EMBL" id="AJ231362">
    <property type="protein sequence ID" value="CAB37218.1"/>
    <property type="molecule type" value="Genomic_DNA"/>
</dbReference>
<dbReference type="EMBL" id="AJ231363">
    <property type="protein sequence ID" value="CAB37220.1"/>
    <property type="molecule type" value="Genomic_DNA"/>
</dbReference>
<dbReference type="EMBL" id="AJ231364">
    <property type="protein sequence ID" value="CAB37222.1"/>
    <property type="molecule type" value="Genomic_DNA"/>
</dbReference>
<dbReference type="EMBL" id="AJ231365">
    <property type="protein sequence ID" value="CAB37224.1"/>
    <property type="molecule type" value="Genomic_DNA"/>
</dbReference>
<dbReference type="EMBL" id="AJ231366">
    <property type="protein sequence ID" value="CAB37226.1"/>
    <property type="molecule type" value="Genomic_DNA"/>
</dbReference>
<dbReference type="EMBL" id="AJ231367">
    <property type="protein sequence ID" value="CAB37228.1"/>
    <property type="molecule type" value="Genomic_DNA"/>
</dbReference>
<dbReference type="EMBL" id="AJ231368">
    <property type="protein sequence ID" value="CAB37230.1"/>
    <property type="molecule type" value="Genomic_DNA"/>
</dbReference>
<dbReference type="EMBL" id="AJ231369">
    <property type="protein sequence ID" value="CAB37232.1"/>
    <property type="molecule type" value="Genomic_DNA"/>
</dbReference>
<dbReference type="EMBL" id="AJ231370">
    <property type="protein sequence ID" value="CAB37234.1"/>
    <property type="molecule type" value="Genomic_DNA"/>
</dbReference>
<dbReference type="EMBL" id="AJ231371">
    <property type="protein sequence ID" value="CAB37236.1"/>
    <property type="molecule type" value="Genomic_DNA"/>
</dbReference>
<dbReference type="EMBL" id="AJ231372">
    <property type="protein sequence ID" value="CAB37238.1"/>
    <property type="molecule type" value="Genomic_DNA"/>
</dbReference>
<dbReference type="EMBL" id="AJ231373">
    <property type="protein sequence ID" value="CAB37240.1"/>
    <property type="molecule type" value="Genomic_DNA"/>
</dbReference>
<dbReference type="EMBL" id="AJ231374">
    <property type="protein sequence ID" value="CAB37623.1"/>
    <property type="molecule type" value="Genomic_DNA"/>
</dbReference>
<dbReference type="EMBL" id="AJ231375">
    <property type="protein sequence ID" value="CAB37242.1"/>
    <property type="molecule type" value="Genomic_DNA"/>
</dbReference>
<dbReference type="EMBL" id="AJ231376">
    <property type="protein sequence ID" value="CAB37244.1"/>
    <property type="molecule type" value="Genomic_DNA"/>
</dbReference>
<dbReference type="EMBL" id="AJ231377">
    <property type="protein sequence ID" value="CAB37246.1"/>
    <property type="molecule type" value="Genomic_DNA"/>
</dbReference>
<dbReference type="EMBL" id="AJ231378">
    <property type="protein sequence ID" value="CAB37248.1"/>
    <property type="molecule type" value="Genomic_DNA"/>
</dbReference>
<dbReference type="EMBL" id="AJ231379">
    <property type="protein sequence ID" value="CAB37250.1"/>
    <property type="molecule type" value="Genomic_DNA"/>
</dbReference>
<dbReference type="EMBL" id="AJ231380">
    <property type="protein sequence ID" value="CAB37252.1"/>
    <property type="molecule type" value="Genomic_DNA"/>
</dbReference>
<dbReference type="EMBL" id="AJ231381">
    <property type="protein sequence ID" value="CAB37254.1"/>
    <property type="molecule type" value="Genomic_DNA"/>
</dbReference>
<dbReference type="EMBL" id="AJ231382">
    <property type="protein sequence ID" value="CAB37256.1"/>
    <property type="molecule type" value="Genomic_DNA"/>
</dbReference>
<dbReference type="EMBL" id="AJ231383">
    <property type="protein sequence ID" value="CAB37258.1"/>
    <property type="molecule type" value="Genomic_DNA"/>
</dbReference>
<dbReference type="EMBL" id="AJ231384">
    <property type="protein sequence ID" value="CAB37260.1"/>
    <property type="molecule type" value="Genomic_DNA"/>
</dbReference>
<dbReference type="EMBL" id="AJ231385">
    <property type="protein sequence ID" value="CAB37262.1"/>
    <property type="molecule type" value="Genomic_DNA"/>
</dbReference>
<dbReference type="EMBL" id="AJ231386">
    <property type="protein sequence ID" value="CAB37264.1"/>
    <property type="molecule type" value="Genomic_DNA"/>
</dbReference>
<dbReference type="EMBL" id="AJ231387">
    <property type="protein sequence ID" value="CAB37266.1"/>
    <property type="molecule type" value="Genomic_DNA"/>
</dbReference>
<dbReference type="EMBL" id="AJ231388">
    <property type="protein sequence ID" value="CAB37268.1"/>
    <property type="molecule type" value="Genomic_DNA"/>
</dbReference>
<dbReference type="EMBL" id="AJ231389">
    <property type="protein sequence ID" value="CAB37270.1"/>
    <property type="molecule type" value="Genomic_DNA"/>
</dbReference>
<dbReference type="EMBL" id="AJ231390">
    <property type="protein sequence ID" value="CAB37272.1"/>
    <property type="molecule type" value="Genomic_DNA"/>
</dbReference>
<dbReference type="EMBL" id="AJ231391">
    <property type="protein sequence ID" value="CAB37274.1"/>
    <property type="molecule type" value="Genomic_DNA"/>
</dbReference>
<dbReference type="EMBL" id="AJ231392">
    <property type="protein sequence ID" value="CAB37276.1"/>
    <property type="molecule type" value="Genomic_DNA"/>
</dbReference>
<dbReference type="EMBL" id="AJ231393">
    <property type="protein sequence ID" value="CAB37278.1"/>
    <property type="molecule type" value="Genomic_DNA"/>
</dbReference>
<dbReference type="EMBL" id="AJ231394">
    <property type="protein sequence ID" value="CAB37280.1"/>
    <property type="molecule type" value="Genomic_DNA"/>
</dbReference>
<dbReference type="EMBL" id="AJ231395">
    <property type="protein sequence ID" value="CAB37282.1"/>
    <property type="molecule type" value="Genomic_DNA"/>
</dbReference>
<dbReference type="EMBL" id="AJ231396">
    <property type="protein sequence ID" value="CAB37284.1"/>
    <property type="molecule type" value="Genomic_DNA"/>
</dbReference>
<dbReference type="EMBL" id="AJ231397">
    <property type="protein sequence ID" value="CAB37286.1"/>
    <property type="molecule type" value="Genomic_DNA"/>
</dbReference>
<dbReference type="EMBL" id="AJ231398">
    <property type="protein sequence ID" value="CAB37288.1"/>
    <property type="molecule type" value="Genomic_DNA"/>
</dbReference>
<dbReference type="EMBL" id="AJ231399">
    <property type="protein sequence ID" value="CAB37290.1"/>
    <property type="molecule type" value="Genomic_DNA"/>
</dbReference>
<dbReference type="EMBL" id="AJ231400">
    <property type="protein sequence ID" value="CAB37292.1"/>
    <property type="molecule type" value="Genomic_DNA"/>
</dbReference>
<dbReference type="EMBL" id="AJ231401">
    <property type="protein sequence ID" value="CAB37628.1"/>
    <property type="molecule type" value="Genomic_DNA"/>
</dbReference>
<dbReference type="EMBL" id="AY344246">
    <property type="protein sequence ID" value="AAR04561.1"/>
    <property type="molecule type" value="Genomic_DNA"/>
</dbReference>
<dbReference type="EMBL" id="AY344247">
    <property type="protein sequence ID" value="AAR04562.1"/>
    <property type="molecule type" value="Genomic_DNA"/>
</dbReference>
<dbReference type="EMBL" id="AY344248">
    <property type="protein sequence ID" value="AAR04563.1"/>
    <property type="molecule type" value="Genomic_DNA"/>
</dbReference>
<dbReference type="EMBL" id="AY344249">
    <property type="protein sequence ID" value="AAR04564.1"/>
    <property type="molecule type" value="Genomic_DNA"/>
</dbReference>
<dbReference type="EMBL" id="AY344250">
    <property type="protein sequence ID" value="AAR04565.1"/>
    <property type="molecule type" value="Genomic_DNA"/>
</dbReference>
<dbReference type="EMBL" id="AY344251">
    <property type="protein sequence ID" value="AAR04566.1"/>
    <property type="molecule type" value="Genomic_DNA"/>
</dbReference>
<dbReference type="EMBL" id="AY344252">
    <property type="protein sequence ID" value="AAR04567.1"/>
    <property type="molecule type" value="Genomic_DNA"/>
</dbReference>
<dbReference type="EMBL" id="AY344253">
    <property type="protein sequence ID" value="AAR04568.1"/>
    <property type="molecule type" value="Genomic_DNA"/>
</dbReference>
<dbReference type="EMBL" id="AY344254">
    <property type="protein sequence ID" value="AAR04569.1"/>
    <property type="molecule type" value="Genomic_DNA"/>
</dbReference>
<dbReference type="EMBL" id="AY344255">
    <property type="protein sequence ID" value="AAR04570.1"/>
    <property type="molecule type" value="Genomic_DNA"/>
</dbReference>
<dbReference type="EMBL" id="AY344256">
    <property type="protein sequence ID" value="AAR04571.1"/>
    <property type="molecule type" value="Genomic_DNA"/>
</dbReference>
<dbReference type="EMBL" id="AY344257">
    <property type="protein sequence ID" value="AAR04572.1"/>
    <property type="molecule type" value="Genomic_DNA"/>
</dbReference>
<dbReference type="EMBL" id="AY344258">
    <property type="protein sequence ID" value="AAR04573.1"/>
    <property type="molecule type" value="Genomic_DNA"/>
</dbReference>
<dbReference type="EMBL" id="AY344259">
    <property type="protein sequence ID" value="AAR04574.1"/>
    <property type="molecule type" value="Genomic_DNA"/>
</dbReference>
<dbReference type="EMBL" id="AY344260">
    <property type="protein sequence ID" value="AAR04575.1"/>
    <property type="molecule type" value="Genomic_DNA"/>
</dbReference>
<dbReference type="EMBL" id="AY344261">
    <property type="protein sequence ID" value="AAR04576.1"/>
    <property type="molecule type" value="Genomic_DNA"/>
</dbReference>
<dbReference type="EMBL" id="AY344262">
    <property type="protein sequence ID" value="AAR04577.1"/>
    <property type="molecule type" value="Genomic_DNA"/>
</dbReference>
<dbReference type="EMBL" id="AY344263">
    <property type="protein sequence ID" value="AAR04578.1"/>
    <property type="molecule type" value="Genomic_DNA"/>
</dbReference>
<dbReference type="EMBL" id="AY344264">
    <property type="protein sequence ID" value="AAR04579.1"/>
    <property type="molecule type" value="Genomic_DNA"/>
</dbReference>
<dbReference type="EMBL" id="AE014134">
    <property type="protein sequence ID" value="AAF52298.1"/>
    <property type="molecule type" value="Genomic_DNA"/>
</dbReference>
<dbReference type="EMBL" id="BT024423">
    <property type="protein sequence ID" value="ABC86485.1"/>
    <property type="molecule type" value="mRNA"/>
</dbReference>
<dbReference type="EMBL" id="AF052470">
    <property type="protein sequence ID" value="AAC27995.1"/>
    <property type="molecule type" value="Genomic_DNA"/>
</dbReference>
<dbReference type="EMBL" id="AF052471">
    <property type="protein sequence ID" value="AAC27997.1"/>
    <property type="molecule type" value="Genomic_DNA"/>
</dbReference>
<dbReference type="EMBL" id="AF052472">
    <property type="protein sequence ID" value="AAC27999.1"/>
    <property type="molecule type" value="Genomic_DNA"/>
</dbReference>
<dbReference type="EMBL" id="AF052473">
    <property type="protein sequence ID" value="AAC28001.1"/>
    <property type="molecule type" value="Genomic_DNA"/>
</dbReference>
<dbReference type="EMBL" id="AF052474">
    <property type="protein sequence ID" value="AAC28003.1"/>
    <property type="molecule type" value="Genomic_DNA"/>
</dbReference>
<dbReference type="EMBL" id="AF052475">
    <property type="protein sequence ID" value="AAC28005.1"/>
    <property type="molecule type" value="Genomic_DNA"/>
</dbReference>
<dbReference type="EMBL" id="AF052476">
    <property type="protein sequence ID" value="AAC28007.1"/>
    <property type="molecule type" value="Genomic_DNA"/>
</dbReference>
<dbReference type="EMBL" id="AF052477">
    <property type="protein sequence ID" value="AAC28009.1"/>
    <property type="molecule type" value="Genomic_DNA"/>
</dbReference>
<dbReference type="EMBL" id="AF052478">
    <property type="protein sequence ID" value="AAC28011.1"/>
    <property type="molecule type" value="Genomic_DNA"/>
</dbReference>
<dbReference type="EMBL" id="AF052479">
    <property type="protein sequence ID" value="AAC28013.1"/>
    <property type="molecule type" value="Genomic_DNA"/>
</dbReference>
<dbReference type="EMBL" id="AF052480">
    <property type="protein sequence ID" value="AAC28015.1"/>
    <property type="molecule type" value="Genomic_DNA"/>
</dbReference>
<dbReference type="EMBL" id="AF052481">
    <property type="protein sequence ID" value="AAC28017.1"/>
    <property type="molecule type" value="Genomic_DNA"/>
</dbReference>
<dbReference type="EMBL" id="AF053250">
    <property type="protein sequence ID" value="AAC28790.1"/>
    <property type="molecule type" value="Genomic_DNA"/>
</dbReference>
<dbReference type="EMBL" id="AF053251">
    <property type="protein sequence ID" value="AAC28792.1"/>
    <property type="molecule type" value="Genomic_DNA"/>
</dbReference>
<dbReference type="EMBL" id="AF053252">
    <property type="protein sequence ID" value="AAC28794.1"/>
    <property type="molecule type" value="Genomic_DNA"/>
</dbReference>
<dbReference type="EMBL" id="AF053253">
    <property type="protein sequence ID" value="AAC28796.1"/>
    <property type="molecule type" value="Genomic_DNA"/>
</dbReference>
<dbReference type="EMBL" id="AF053254">
    <property type="protein sequence ID" value="AAC28798.1"/>
    <property type="molecule type" value="Genomic_DNA"/>
</dbReference>
<dbReference type="EMBL" id="AF053255">
    <property type="protein sequence ID" value="AAC28800.1"/>
    <property type="molecule type" value="Genomic_DNA"/>
</dbReference>
<dbReference type="EMBL" id="AF053256">
    <property type="protein sequence ID" value="AAC28802.1"/>
    <property type="molecule type" value="Genomic_DNA"/>
</dbReference>
<dbReference type="EMBL" id="AF053257">
    <property type="protein sequence ID" value="AAC28804.1"/>
    <property type="molecule type" value="Genomic_DNA"/>
</dbReference>
<dbReference type="EMBL" id="AF053258">
    <property type="protein sequence ID" value="AAC28806.1"/>
    <property type="molecule type" value="Genomic_DNA"/>
</dbReference>
<dbReference type="EMBL" id="AF053259">
    <property type="protein sequence ID" value="AAC28808.1"/>
    <property type="molecule type" value="Genomic_DNA"/>
</dbReference>
<dbReference type="EMBL" id="AF053260">
    <property type="protein sequence ID" value="AAC28810.1"/>
    <property type="molecule type" value="Genomic_DNA"/>
</dbReference>
<dbReference type="EMBL" id="AF053261">
    <property type="protein sequence ID" value="AAC28812.1"/>
    <property type="molecule type" value="Genomic_DNA"/>
</dbReference>
<dbReference type="EMBL" id="AF053262">
    <property type="protein sequence ID" value="AAC28814.1"/>
    <property type="molecule type" value="Genomic_DNA"/>
</dbReference>
<dbReference type="EMBL" id="AF053263">
    <property type="protein sequence ID" value="AAC28816.1"/>
    <property type="molecule type" value="Genomic_DNA"/>
</dbReference>
<dbReference type="EMBL" id="AF053264">
    <property type="protein sequence ID" value="AAC28818.1"/>
    <property type="molecule type" value="Genomic_DNA"/>
</dbReference>
<dbReference type="EMBL" id="AF053265">
    <property type="protein sequence ID" value="AAC28820.1"/>
    <property type="molecule type" value="Genomic_DNA"/>
</dbReference>
<dbReference type="EMBL" id="AF053266">
    <property type="protein sequence ID" value="AAC28822.1"/>
    <property type="molecule type" value="Genomic_DNA"/>
</dbReference>
<dbReference type="EMBL" id="AF053267">
    <property type="protein sequence ID" value="AAC28824.1"/>
    <property type="molecule type" value="Genomic_DNA"/>
</dbReference>
<dbReference type="EMBL" id="AF053268">
    <property type="protein sequence ID" value="AAC28826.1"/>
    <property type="molecule type" value="Genomic_DNA"/>
</dbReference>
<dbReference type="EMBL" id="AF053269">
    <property type="protein sequence ID" value="AAC28828.1"/>
    <property type="molecule type" value="Genomic_DNA"/>
</dbReference>
<dbReference type="EMBL" id="AF053270">
    <property type="protein sequence ID" value="AAC28830.1"/>
    <property type="molecule type" value="Genomic_DNA"/>
</dbReference>
<dbReference type="EMBL" id="AF053271">
    <property type="protein sequence ID" value="AAC28832.1"/>
    <property type="molecule type" value="Genomic_DNA"/>
</dbReference>
<dbReference type="EMBL" id="AF053272">
    <property type="protein sequence ID" value="AAC28834.1"/>
    <property type="molecule type" value="Genomic_DNA"/>
</dbReference>
<dbReference type="EMBL" id="AF053273">
    <property type="protein sequence ID" value="AAC28836.1"/>
    <property type="molecule type" value="Genomic_DNA"/>
</dbReference>
<dbReference type="EMBL" id="AF053274">
    <property type="protein sequence ID" value="AAC28838.1"/>
    <property type="molecule type" value="Genomic_DNA"/>
</dbReference>
<dbReference type="EMBL" id="AF053275">
    <property type="protein sequence ID" value="AAC28840.1"/>
    <property type="molecule type" value="Genomic_DNA"/>
</dbReference>
<dbReference type="EMBL" id="AF053276">
    <property type="protein sequence ID" value="AAC28842.1"/>
    <property type="molecule type" value="Genomic_DNA"/>
</dbReference>
<dbReference type="PIR" id="S02853">
    <property type="entry name" value="S02853"/>
</dbReference>
<dbReference type="RefSeq" id="NP_476644.1">
    <property type="nucleotide sequence ID" value="NM_057296.2"/>
</dbReference>
<dbReference type="SMR" id="P10333"/>
<dbReference type="BioGRID" id="59983">
    <property type="interactions" value="5"/>
</dbReference>
<dbReference type="DIP" id="DIP-23208N"/>
<dbReference type="FunCoup" id="P10333">
    <property type="interactions" value="12"/>
</dbReference>
<dbReference type="IntAct" id="P10333">
    <property type="interactions" value="5"/>
</dbReference>
<dbReference type="STRING" id="7227.FBpp0078786"/>
<dbReference type="GlyCosmos" id="P10333">
    <property type="glycosylation" value="4 sites, No reported glycans"/>
</dbReference>
<dbReference type="GlyGen" id="P10333">
    <property type="glycosylation" value="4 sites"/>
</dbReference>
<dbReference type="PaxDb" id="7227-FBpp0078786"/>
<dbReference type="DNASU" id="33817"/>
<dbReference type="EnsemblMetazoa" id="FBtr0079155">
    <property type="protein sequence ID" value="FBpp0078786"/>
    <property type="gene ID" value="FBgn0002855"/>
</dbReference>
<dbReference type="GeneID" id="33817"/>
<dbReference type="KEGG" id="dme:Dmel_CG8982"/>
<dbReference type="AGR" id="FB:FBgn0002855"/>
<dbReference type="CTD" id="33817"/>
<dbReference type="FlyBase" id="FBgn0002855">
    <property type="gene designation" value="Acp26Aa"/>
</dbReference>
<dbReference type="VEuPathDB" id="VectorBase:FBgn0002855"/>
<dbReference type="GeneTree" id="ENSGT00940000176795"/>
<dbReference type="HOGENOM" id="CLU_1162203_0_0_1"/>
<dbReference type="InParanoid" id="P10333"/>
<dbReference type="OMA" id="AQKINYE"/>
<dbReference type="OrthoDB" id="7870919at2759"/>
<dbReference type="PhylomeDB" id="P10333"/>
<dbReference type="SignaLink" id="P10333"/>
<dbReference type="BioGRID-ORCS" id="33817">
    <property type="hits" value="0 hits in 1 CRISPR screen"/>
</dbReference>
<dbReference type="GenomeRNAi" id="33817"/>
<dbReference type="PRO" id="PR:P10333"/>
<dbReference type="Proteomes" id="UP000000803">
    <property type="component" value="Chromosome 2L"/>
</dbReference>
<dbReference type="Bgee" id="FBgn0002855">
    <property type="expression patterns" value="Expressed in spermatid in male reproductive gland and 33 other cell types or tissues"/>
</dbReference>
<dbReference type="GO" id="GO:0005737">
    <property type="term" value="C:cytoplasm"/>
    <property type="evidence" value="ECO:0007669"/>
    <property type="project" value="UniProtKB-SubCell"/>
</dbReference>
<dbReference type="GO" id="GO:0005576">
    <property type="term" value="C:extracellular region"/>
    <property type="evidence" value="ECO:0000255"/>
    <property type="project" value="FlyBase"/>
</dbReference>
<dbReference type="GO" id="GO:0005615">
    <property type="term" value="C:extracellular space"/>
    <property type="evidence" value="ECO:0007005"/>
    <property type="project" value="FlyBase"/>
</dbReference>
<dbReference type="GO" id="GO:0042802">
    <property type="term" value="F:identical protein binding"/>
    <property type="evidence" value="ECO:0000353"/>
    <property type="project" value="FlyBase"/>
</dbReference>
<dbReference type="GO" id="GO:0007618">
    <property type="term" value="P:mating"/>
    <property type="evidence" value="ECO:0007669"/>
    <property type="project" value="InterPro"/>
</dbReference>
<dbReference type="GO" id="GO:2000130">
    <property type="term" value="P:positive regulation of octopamine signaling pathway"/>
    <property type="evidence" value="ECO:0000315"/>
    <property type="project" value="UniProtKB"/>
</dbReference>
<dbReference type="GO" id="GO:0060279">
    <property type="term" value="P:positive regulation of ovulation"/>
    <property type="evidence" value="ECO:0000315"/>
    <property type="project" value="UniProtKB"/>
</dbReference>
<dbReference type="GO" id="GO:0019953">
    <property type="term" value="P:sexual reproduction"/>
    <property type="evidence" value="ECO:0000270"/>
    <property type="project" value="FlyBase"/>
</dbReference>
<dbReference type="GO" id="GO:0046692">
    <property type="term" value="P:sperm competition"/>
    <property type="evidence" value="ECO:0000304"/>
    <property type="project" value="FlyBase"/>
</dbReference>
<dbReference type="InterPro" id="IPR004315">
    <property type="entry name" value="Male_ac_gland_sc"/>
</dbReference>
<dbReference type="Pfam" id="PF03082">
    <property type="entry name" value="MAGSP"/>
    <property type="match status" value="1"/>
</dbReference>
<evidence type="ECO:0000255" key="1"/>
<evidence type="ECO:0000256" key="2">
    <source>
        <dbReference type="SAM" id="MobiDB-lite"/>
    </source>
</evidence>
<evidence type="ECO:0000269" key="3">
    <source>
    </source>
</evidence>
<evidence type="ECO:0000269" key="4">
    <source>
    </source>
</evidence>
<evidence type="ECO:0000269" key="5">
    <source>
    </source>
</evidence>
<evidence type="ECO:0000269" key="6">
    <source>
    </source>
</evidence>
<evidence type="ECO:0000269" key="7">
    <source>
    </source>
</evidence>
<evidence type="ECO:0000269" key="8">
    <source>
    </source>
</evidence>
<evidence type="ECO:0000269" key="9">
    <source>
    </source>
</evidence>
<evidence type="ECO:0000269" key="10">
    <source>
    </source>
</evidence>
<evidence type="ECO:0000269" key="11">
    <source>
    </source>
</evidence>
<evidence type="ECO:0000269" key="12">
    <source>
    </source>
</evidence>
<evidence type="ECO:0000269" key="13">
    <source>
    </source>
</evidence>
<evidence type="ECO:0000303" key="14">
    <source>
    </source>
</evidence>
<evidence type="ECO:0000303" key="15">
    <source>
    </source>
</evidence>
<evidence type="ECO:0000303" key="16">
    <source>
    </source>
</evidence>
<evidence type="ECO:0000303" key="17">
    <source>
    </source>
</evidence>
<evidence type="ECO:0000312" key="18">
    <source>
        <dbReference type="FlyBase" id="FBgn0002855"/>
    </source>
</evidence>
<keyword id="KW-0085">Behavior</keyword>
<keyword id="KW-0963">Cytoplasm</keyword>
<keyword id="KW-0325">Glycoprotein</keyword>
<keyword id="KW-1185">Reference proteome</keyword>
<keyword id="KW-0964">Secreted</keyword>
<keyword id="KW-0732">Signal</keyword>
<sequence>MNQILLCSPILLLLFTVASCDSEQQLDSAMHLKSDSTKSASLKNVAPKNDETQAKIAKDDVALKDAKKGDYIMDIDISDLPLDDYPINRSKSLKSSSIDLNNIPFNKGLDDFPAKEKNQGSNQSALKALQQRLLTEQNNSLLLRNHSIYLMKEIEARKTDIIKVRQLNLDLELELNTVNRRLLELNGQLQNTRKSTKPCKKRSSKDSAPPAANQFQEANVRNTYRNKYLTLLKELSQKINNEIAKVATDVPTETNPSQGNLPTL</sequence>
<comment type="function">
    <text evidence="4 5 9 12">Male seminal protein which enhances ovulation in female Drosophila by stimulating the release of oocytes by the ovary following mating (PubMed:10662669, PubMed:15640356, PubMed:24101486, PubMed:7479736). Acts by increasing octopamine (OA) neuronal signaling in the female genital tract leading to the postmating relaxation of the oviduct muscles (PubMed:24101486). This activation of the OA signaling pathway is likely to indirectly contribute to the mating-dependent increase in the number of OA synaptic sites in the female reproductive tract (PubMed:24101486).</text>
</comment>
<comment type="function">
    <molecule>CP3-N</molecule>
    <text evidence="5">Male seminal peptide which is able to enhance ovulation in female Drosophila.</text>
</comment>
<comment type="function">
    <molecule>CP3-C</molecule>
    <text evidence="5">Male seminal peptide which is able to enhance ovulation in female Drosophila.</text>
</comment>
<comment type="subunit">
    <text evidence="6 7">Homodimer.</text>
</comment>
<comment type="subunit">
    <molecule>CP3-C</molecule>
    <text evidence="6">May form a homodimer.</text>
</comment>
<comment type="subcellular location">
    <subcellularLocation>
        <location evidence="11">Secreted</location>
    </subcellularLocation>
    <subcellularLocation>
        <location evidence="8">Cytoplasm</location>
    </subcellularLocation>
    <text evidence="8">In 1 day old virgin males, secreted into the cytoplasm of accessory gland cells (PubMed:2257979). In 5 day old males it localizes to cytoplasmic vesicles of the secondary cells (PubMed:2257979).</text>
</comment>
<comment type="tissue specificity">
    <text evidence="3 7 8 10 11 12 13">Produced in the male accessory glands and secreted into seminal fluid (at protein level) (PubMed:10612039, PubMed:2257979, PubMed:3142802, PubMed:7479736, PubMed:7556947). Detected in the main cells and secondary cells of the accessory glands of 1 day old males (at protein level) (PubMed:20138215, PubMed:2257979, PubMed:24514904, PubMed:7479736, PubMed:7556947). In 5 day old males, confined to the secondary cells and only reappears in the main cells after mating (at protein level) (PubMed:2257979). Produced in adult males 3-4 hr after eclosion, levels increase reaching a peak at day 3-5 which is maintained until at least day 10 of adulthood (at protein level) (PubMed:2257979). In unmated male adults, levels are maintained for the first 6 days of adulthood and then gradually decrease for at least the next 8 days (PubMed:2257979). In mated females, detected in the genital tract 3 minutes after the start of mating (ASM) and is secreted into the female hemolymph via the posterior vaginal wall 5 minutes ASM (at protein level) (PubMed:10612039, PubMed:2257979, PubMed:7556947).</text>
</comment>
<comment type="induction">
    <text evidence="8">Up-regulated in response to mating.</text>
</comment>
<comment type="PTM">
    <text evidence="8 13">Glycosylation.</text>
</comment>
<comment type="PTM">
    <text evidence="3 8 10 11 13">Undergoes several cleavages as it is secreted and is further processed in the recipient female (PubMed:10612039, PubMed:2257979, PubMed:24514904, PubMed:3142802, PubMed:7556947). The precursor molecule is proteolytically cleaved by the seminal metalloprotease Semp1 at Lys-48 to produce CP1-N and CP1-C (PubMed:2257979, PubMed:24514904, PubMed:3142802, PubMed:7556947).</text>
</comment>
<comment type="PTM">
    <molecule>CP1-C</molecule>
    <text evidence="8 10 11 13">Cleaved at Lys-67 by Semp1 to generate CP2-N and CP2-C (PubMed:2257979, PubMed:24514904, PubMed:3142802, PubMed:7556947). Cleavage appears to take place in the mated female genital tract (PubMed:2257979, PubMed:7556947).</text>
</comment>
<comment type="PTM">
    <molecule>CP2-C</molecule>
    <text evidence="8 10 11 13">Cleaved at Lys-117 by Semp1 to generate CP3-N and CP3-C (PubMed:2257979, PubMed:24514904, PubMed:3142802, PubMed:7556947). Cleavage appears to take place in the mated female genital tract (PubMed:2257979, PubMed:7556947).</text>
</comment>
<proteinExistence type="evidence at protein level"/>
<reference key="1">
    <citation type="journal article" date="1988" name="Genes Dev.">
        <title>Structure and expression of a Drosophila male accessory gland gene whose product resembles a peptide pheromone precursor.</title>
        <authorList>
            <person name="Monsma S.A."/>
            <person name="Wolfner M.F."/>
        </authorList>
    </citation>
    <scope>NUCLEOTIDE SEQUENCE [GENOMIC DNA]</scope>
    <scope>SUBCELLULAR LOCATION</scope>
    <scope>TISSUE SPECIFICITY</scope>
    <scope>PROTEOLYTIC PROCESSING</scope>
    <scope>PROTEOLYTIC PROCESSING (CP1-C AND CP2-C)</scope>
    <source>
        <strain>Canton-S</strain>
    </source>
</reference>
<reference key="2">
    <citation type="journal article" date="1992" name="Genetics">
        <title>Polymorphism and divergence in the Mst26A male accessory gland gene region in Drosophila.</title>
        <authorList>
            <person name="Aguade M."/>
            <person name="Miyashita N."/>
            <person name="Langley C.H."/>
        </authorList>
    </citation>
    <scope>NUCLEOTIDE SEQUENCE [GENOMIC DNA]</scope>
    <source>
        <strain>NC-001</strain>
        <strain>NC-002</strain>
        <strain>NC-003</strain>
        <strain>NC-004</strain>
        <strain>NC-005</strain>
        <strain>NC-006</strain>
        <strain>NC-007</strain>
        <strain>NC-008</strain>
        <strain>NC-009</strain>
        <strain>NC-010</strain>
    </source>
</reference>
<reference key="3">
    <citation type="journal article" date="1998" name="Genetics">
        <title>Different forces drive the evolution of the Acp26Aa and Acp26Ab accessory gland genes in the Drosophila melanogaster species complex.</title>
        <authorList>
            <person name="Aguade M."/>
        </authorList>
    </citation>
    <scope>NUCLEOTIDE SEQUENCE [GENOMIC DNA]</scope>
    <source>
        <strain>La10</strain>
        <strain>La105</strain>
        <strain>La106</strain>
        <strain>La108</strain>
        <strain>La116</strain>
        <strain>La118</strain>
        <strain>La120</strain>
        <strain>La125</strain>
        <strain>La13</strain>
        <strain>La14</strain>
        <strain>La15</strain>
        <strain>La25</strain>
        <strain>La27</strain>
        <strain>La28</strain>
        <strain>La3</strain>
        <strain>La31</strain>
        <strain>La32</strain>
        <strain>La36</strain>
        <strain>La37</strain>
        <strain>La46</strain>
        <strain>La54</strain>
        <strain>La58</strain>
        <strain>La60</strain>
        <strain>La62</strain>
        <strain>Ma11</strain>
        <strain>Ma18</strain>
        <strain>Ma20</strain>
        <strain>Ma21</strain>
        <strain>Ma23</strain>
        <strain>Ma24</strain>
        <strain>Ma3</strain>
        <strain>Ma31</strain>
        <strain>Ma35</strain>
        <strain>Ma37</strain>
        <strain>Ma43</strain>
        <strain>Ma50</strain>
        <strain>Ma53</strain>
        <strain>Ma56</strain>
        <strain>Ma57</strain>
        <strain>Ma6</strain>
        <strain>Ma60</strain>
        <strain>Ma74</strain>
        <strain>Mo13a</strain>
        <strain>Mo29b</strain>
        <strain>Mo34a</strain>
        <strain>Mo36a</strain>
        <strain>Mo37a</strain>
        <strain>Mo40b</strain>
        <strain>Mo47a</strain>
        <strain>Mo52b</strain>
        <strain>Mo79b</strain>
        <strain>Mo80b</strain>
    </source>
</reference>
<reference key="4">
    <citation type="journal article" date="2003" name="Evolution">
        <title>Population genetics of accessory gland proteins and sexual behavior in Drosophila melanogaster populations from Evolution Canyon.</title>
        <authorList>
            <person name="Panhuis T.M."/>
            <person name="Swanson W.J."/>
            <person name="Nunney L."/>
        </authorList>
    </citation>
    <scope>NUCLEOTIDE SEQUENCE [GENOMIC DNA]</scope>
    <source>
        <strain>NFS 5.1</strain>
        <strain>NFS 5.2</strain>
        <strain>NFS 5.3</strain>
        <strain>NFS 5.4</strain>
        <strain>NFS 6.1</strain>
        <strain>NFS 6.2</strain>
        <strain>NFS 6.3</strain>
        <strain>NFS 6.4</strain>
        <strain>NFS 7.8</strain>
        <strain>SFS 1.1</strain>
        <strain>SFS 1.2</strain>
        <strain>SFS 1.4</strain>
        <strain>SFS 2.2</strain>
        <strain>SFS 2.3</strain>
        <strain>SFS 2.4</strain>
        <strain>SFS 3.1</strain>
        <strain>SFS 3.2</strain>
        <strain>SFS 3.3</strain>
        <strain>SFS 3.4</strain>
    </source>
</reference>
<reference key="5">
    <citation type="journal article" date="2000" name="Science">
        <title>The genome sequence of Drosophila melanogaster.</title>
        <authorList>
            <person name="Adams M.D."/>
            <person name="Celniker S.E."/>
            <person name="Holt R.A."/>
            <person name="Evans C.A."/>
            <person name="Gocayne J.D."/>
            <person name="Amanatides P.G."/>
            <person name="Scherer S.E."/>
            <person name="Li P.W."/>
            <person name="Hoskins R.A."/>
            <person name="Galle R.F."/>
            <person name="George R.A."/>
            <person name="Lewis S.E."/>
            <person name="Richards S."/>
            <person name="Ashburner M."/>
            <person name="Henderson S.N."/>
            <person name="Sutton G.G."/>
            <person name="Wortman J.R."/>
            <person name="Yandell M.D."/>
            <person name="Zhang Q."/>
            <person name="Chen L.X."/>
            <person name="Brandon R.C."/>
            <person name="Rogers Y.-H.C."/>
            <person name="Blazej R.G."/>
            <person name="Champe M."/>
            <person name="Pfeiffer B.D."/>
            <person name="Wan K.H."/>
            <person name="Doyle C."/>
            <person name="Baxter E.G."/>
            <person name="Helt G."/>
            <person name="Nelson C.R."/>
            <person name="Miklos G.L.G."/>
            <person name="Abril J.F."/>
            <person name="Agbayani A."/>
            <person name="An H.-J."/>
            <person name="Andrews-Pfannkoch C."/>
            <person name="Baldwin D."/>
            <person name="Ballew R.M."/>
            <person name="Basu A."/>
            <person name="Baxendale J."/>
            <person name="Bayraktaroglu L."/>
            <person name="Beasley E.M."/>
            <person name="Beeson K.Y."/>
            <person name="Benos P.V."/>
            <person name="Berman B.P."/>
            <person name="Bhandari D."/>
            <person name="Bolshakov S."/>
            <person name="Borkova D."/>
            <person name="Botchan M.R."/>
            <person name="Bouck J."/>
            <person name="Brokstein P."/>
            <person name="Brottier P."/>
            <person name="Burtis K.C."/>
            <person name="Busam D.A."/>
            <person name="Butler H."/>
            <person name="Cadieu E."/>
            <person name="Center A."/>
            <person name="Chandra I."/>
            <person name="Cherry J.M."/>
            <person name="Cawley S."/>
            <person name="Dahlke C."/>
            <person name="Davenport L.B."/>
            <person name="Davies P."/>
            <person name="de Pablos B."/>
            <person name="Delcher A."/>
            <person name="Deng Z."/>
            <person name="Mays A.D."/>
            <person name="Dew I."/>
            <person name="Dietz S.M."/>
            <person name="Dodson K."/>
            <person name="Doup L.E."/>
            <person name="Downes M."/>
            <person name="Dugan-Rocha S."/>
            <person name="Dunkov B.C."/>
            <person name="Dunn P."/>
            <person name="Durbin K.J."/>
            <person name="Evangelista C.C."/>
            <person name="Ferraz C."/>
            <person name="Ferriera S."/>
            <person name="Fleischmann W."/>
            <person name="Fosler C."/>
            <person name="Gabrielian A.E."/>
            <person name="Garg N.S."/>
            <person name="Gelbart W.M."/>
            <person name="Glasser K."/>
            <person name="Glodek A."/>
            <person name="Gong F."/>
            <person name="Gorrell J.H."/>
            <person name="Gu Z."/>
            <person name="Guan P."/>
            <person name="Harris M."/>
            <person name="Harris N.L."/>
            <person name="Harvey D.A."/>
            <person name="Heiman T.J."/>
            <person name="Hernandez J.R."/>
            <person name="Houck J."/>
            <person name="Hostin D."/>
            <person name="Houston K.A."/>
            <person name="Howland T.J."/>
            <person name="Wei M.-H."/>
            <person name="Ibegwam C."/>
            <person name="Jalali M."/>
            <person name="Kalush F."/>
            <person name="Karpen G.H."/>
            <person name="Ke Z."/>
            <person name="Kennison J.A."/>
            <person name="Ketchum K.A."/>
            <person name="Kimmel B.E."/>
            <person name="Kodira C.D."/>
            <person name="Kraft C.L."/>
            <person name="Kravitz S."/>
            <person name="Kulp D."/>
            <person name="Lai Z."/>
            <person name="Lasko P."/>
            <person name="Lei Y."/>
            <person name="Levitsky A.A."/>
            <person name="Li J.H."/>
            <person name="Li Z."/>
            <person name="Liang Y."/>
            <person name="Lin X."/>
            <person name="Liu X."/>
            <person name="Mattei B."/>
            <person name="McIntosh T.C."/>
            <person name="McLeod M.P."/>
            <person name="McPherson D."/>
            <person name="Merkulov G."/>
            <person name="Milshina N.V."/>
            <person name="Mobarry C."/>
            <person name="Morris J."/>
            <person name="Moshrefi A."/>
            <person name="Mount S.M."/>
            <person name="Moy M."/>
            <person name="Murphy B."/>
            <person name="Murphy L."/>
            <person name="Muzny D.M."/>
            <person name="Nelson D.L."/>
            <person name="Nelson D.R."/>
            <person name="Nelson K.A."/>
            <person name="Nixon K."/>
            <person name="Nusskern D.R."/>
            <person name="Pacleb J.M."/>
            <person name="Palazzolo M."/>
            <person name="Pittman G.S."/>
            <person name="Pan S."/>
            <person name="Pollard J."/>
            <person name="Puri V."/>
            <person name="Reese M.G."/>
            <person name="Reinert K."/>
            <person name="Remington K."/>
            <person name="Saunders R.D.C."/>
            <person name="Scheeler F."/>
            <person name="Shen H."/>
            <person name="Shue B.C."/>
            <person name="Siden-Kiamos I."/>
            <person name="Simpson M."/>
            <person name="Skupski M.P."/>
            <person name="Smith T.J."/>
            <person name="Spier E."/>
            <person name="Spradling A.C."/>
            <person name="Stapleton M."/>
            <person name="Strong R."/>
            <person name="Sun E."/>
            <person name="Svirskas R."/>
            <person name="Tector C."/>
            <person name="Turner R."/>
            <person name="Venter E."/>
            <person name="Wang A.H."/>
            <person name="Wang X."/>
            <person name="Wang Z.-Y."/>
            <person name="Wassarman D.A."/>
            <person name="Weinstock G.M."/>
            <person name="Weissenbach J."/>
            <person name="Williams S.M."/>
            <person name="Woodage T."/>
            <person name="Worley K.C."/>
            <person name="Wu D."/>
            <person name="Yang S."/>
            <person name="Yao Q.A."/>
            <person name="Ye J."/>
            <person name="Yeh R.-F."/>
            <person name="Zaveri J.S."/>
            <person name="Zhan M."/>
            <person name="Zhang G."/>
            <person name="Zhao Q."/>
            <person name="Zheng L."/>
            <person name="Zheng X.H."/>
            <person name="Zhong F.N."/>
            <person name="Zhong W."/>
            <person name="Zhou X."/>
            <person name="Zhu S.C."/>
            <person name="Zhu X."/>
            <person name="Smith H.O."/>
            <person name="Gibbs R.A."/>
            <person name="Myers E.W."/>
            <person name="Rubin G.M."/>
            <person name="Venter J.C."/>
        </authorList>
    </citation>
    <scope>NUCLEOTIDE SEQUENCE [LARGE SCALE GENOMIC DNA]</scope>
    <source>
        <strain>Berkeley</strain>
    </source>
</reference>
<reference key="6">
    <citation type="journal article" date="2002" name="Genome Biol.">
        <title>Annotation of the Drosophila melanogaster euchromatic genome: a systematic review.</title>
        <authorList>
            <person name="Misra S."/>
            <person name="Crosby M.A."/>
            <person name="Mungall C.J."/>
            <person name="Matthews B.B."/>
            <person name="Campbell K.S."/>
            <person name="Hradecky P."/>
            <person name="Huang Y."/>
            <person name="Kaminker J.S."/>
            <person name="Millburn G.H."/>
            <person name="Prochnik S.E."/>
            <person name="Smith C.D."/>
            <person name="Tupy J.L."/>
            <person name="Whitfield E.J."/>
            <person name="Bayraktaroglu L."/>
            <person name="Berman B.P."/>
            <person name="Bettencourt B.R."/>
            <person name="Celniker S.E."/>
            <person name="de Grey A.D.N.J."/>
            <person name="Drysdale R.A."/>
            <person name="Harris N.L."/>
            <person name="Richter J."/>
            <person name="Russo S."/>
            <person name="Schroeder A.J."/>
            <person name="Shu S.Q."/>
            <person name="Stapleton M."/>
            <person name="Yamada C."/>
            <person name="Ashburner M."/>
            <person name="Gelbart W.M."/>
            <person name="Rubin G.M."/>
            <person name="Lewis S.E."/>
        </authorList>
    </citation>
    <scope>GENOME REANNOTATION</scope>
    <source>
        <strain>Berkeley</strain>
    </source>
</reference>
<reference key="7">
    <citation type="submission" date="2006-01" db="EMBL/GenBank/DDBJ databases">
        <authorList>
            <person name="Stapleton M."/>
            <person name="Carlson J.W."/>
            <person name="Chavez C."/>
            <person name="Frise E."/>
            <person name="George R.A."/>
            <person name="Pacleb J.M."/>
            <person name="Park S."/>
            <person name="Wan K.H."/>
            <person name="Yu C."/>
            <person name="Celniker S.E."/>
        </authorList>
    </citation>
    <scope>NUCLEOTIDE SEQUENCE [LARGE SCALE MRNA]</scope>
</reference>
<reference key="8">
    <citation type="journal article" date="1998" name="Mol. Biol. Evol.">
        <title>Positive selection driving the evolution of a gene of male reproduction, Acp26Aa, of Drosophila: II. Divergence versus polymorphism.</title>
        <authorList>
            <person name="Tsaur S.-C."/>
            <person name="Ting C.-T."/>
            <person name="Wu C.-I."/>
        </authorList>
    </citation>
    <scope>NUCLEOTIDE SEQUENCE [GENOMIC DNA] OF 8-264</scope>
    <source>
        <strain>AF1</strain>
        <strain>AF10</strain>
        <strain>AF2</strain>
        <strain>AF3</strain>
        <strain>AF4</strain>
        <strain>AF5</strain>
        <strain>AF6</strain>
        <strain>AF7</strain>
        <strain>AF8</strain>
        <strain>AF9</strain>
        <strain>Au1</strain>
        <strain>Au10</strain>
        <strain>Au2</strain>
        <strain>Au3</strain>
        <strain>Au4</strain>
        <strain>Au5</strain>
        <strain>Au6</strain>
        <strain>Au7</strain>
        <strain>Au8</strain>
        <strain>Au9</strain>
        <strain>NC-001</strain>
        <strain>NC-002</strain>
        <strain>NC-003</strain>
        <strain>NC-004</strain>
        <strain>NC-005</strain>
        <strain>NC-006</strain>
        <strain>NC-007</strain>
        <strain>NC-008</strain>
        <strain>NC-009</strain>
        <strain>NC-010</strain>
        <strain>Ny1</strain>
        <strain>Ny2</strain>
        <strain>Ny3</strain>
        <strain>Ny4</strain>
        <strain>Ny5</strain>
        <strain>Ny6</strain>
        <strain>Ny7</strain>
        <strain>Ny8</strain>
        <strain>TW1</strain>
        <strain>TW10</strain>
        <strain>TW11</strain>
        <strain>TW2</strain>
        <strain>TW3</strain>
        <strain>TW4</strain>
        <strain>TW5</strain>
        <strain>TW6</strain>
        <strain>TW7</strain>
        <strain>TW8</strain>
        <strain>TW9</strain>
    </source>
</reference>
<reference key="9">
    <citation type="journal article" date="1990" name="Dev. Biol.">
        <title>Synthesis of two Drosophila male accessory gland proteins and their fate after transfer to the female during mating.</title>
        <authorList>
            <person name="Monsma S.A."/>
            <person name="Harada H.A."/>
            <person name="Wolfner M.F."/>
        </authorList>
    </citation>
    <scope>SUBCELLULAR LOCATION</scope>
    <scope>TISSUE SPECIFICITY</scope>
    <scope>INDUCTION</scope>
    <scope>GLYCOSYLATION</scope>
    <scope>PROTEOLYTIC PROCESSING</scope>
    <scope>PROTEOLYTIC PROCESSING (CP1-C AND CP2-C)</scope>
</reference>
<reference key="10">
    <citation type="journal article" date="1995" name="Dev. Biol.">
        <title>Male and female cooperate in the prohormone-like processing of a Drosophila melanogaster seminal fluid protein.</title>
        <authorList>
            <person name="Park M."/>
            <person name="Wolfner M.F."/>
        </authorList>
    </citation>
    <scope>TISSUE SPECIFICITY</scope>
    <scope>GLYCOSYLATION</scope>
    <scope>PROTEOLYTIC PROCESSING</scope>
    <scope>PROTEOLYTIC PROCESSING (CP1-C AND CP2-C)</scope>
</reference>
<reference key="11">
    <citation type="journal article" date="1995" name="Proc. Natl. Acad. Sci. U.S.A.">
        <title>A Drosophila seminal fluid protein, Acp26Aa, stimulates egg laying in females for 1 day after mating.</title>
        <authorList>
            <person name="Herndon L.A."/>
            <person name="Wolfner M.F."/>
        </authorList>
    </citation>
    <scope>FUNCTION</scope>
    <scope>TISSUE SPECIFICITY</scope>
    <scope>MUTAGENESIS OF 43-LYS--LEU-264</scope>
</reference>
<reference key="12">
    <citation type="journal article" date="1999" name="Insect Biochem. Mol. Biol.">
        <title>Drosophila seminal fluid proteins enter the circulatory system of the mated female fly by crossing the posterior vaginal wall.</title>
        <authorList>
            <person name="Lung O."/>
            <person name="Wolfner M.F."/>
        </authorList>
    </citation>
    <scope>TISSUE SPECIFICITY</scope>
    <scope>PROTEOLYTIC PROCESSING</scope>
</reference>
<reference key="13">
    <citation type="journal article" date="2000" name="Curr. Biol.">
        <title>The Drosophila seminal fluid protein Acp26Aa stimulates release of oocytes by the ovary.</title>
        <authorList>
            <person name="Heifetz Y."/>
            <person name="Lung O."/>
            <person name="Frongillo E.A. Jr."/>
            <person name="Wolfner M.F."/>
        </authorList>
    </citation>
    <scope>FUNCTION</scope>
    <scope>MUTAGENESIS OF 43-LYS--LEU-264</scope>
</reference>
<reference key="14">
    <citation type="journal article" date="2005" name="Proc. Natl. Acad. Sci. U.S.A.">
        <title>Two cleavage products of the Drosophila accessory gland protein ovulin can independently induce ovulation.</title>
        <authorList>
            <person name="Heifetz Y."/>
            <person name="Vandenberg L.N."/>
            <person name="Cohn H.I."/>
            <person name="Wolfner M.F."/>
        </authorList>
    </citation>
    <scope>FUNCTION</scope>
    <scope>FUNCTION (CP3-N AND CP3-C)</scope>
</reference>
<reference key="15">
    <citation type="journal article" date="2006" name="Proc. Natl. Acad. Sci. U.S.A.">
        <title>Evidence for structural constraint on ovulin, a rapidly evolving Drosophila melanogaster seminal protein.</title>
        <authorList>
            <person name="Wong A."/>
            <person name="Albright S.N."/>
            <person name="Wolfner M.F."/>
        </authorList>
    </citation>
    <scope>SUBUNIT</scope>
    <scope>SUBUNIT (CP3-C)</scope>
</reference>
<reference key="16">
    <citation type="journal article" date="2010" name="Insect Biochem. Mol. Biol.">
        <title>Immortal coils: conserved dimerization motifs of the Drosophila ovulation prohormone ovulin.</title>
        <authorList>
            <person name="Wong A."/>
            <person name="Christopher A.B."/>
            <person name="Buehner N.A."/>
            <person name="Wolfner M.F."/>
        </authorList>
    </citation>
    <scope>SUBUNIT</scope>
    <scope>TISSUE SPECIFICITY</scope>
    <scope>MUTAGENESIS OF 224-TYR--TYR-228; 229-LEU--LEU-232; 236-SER--ILE-239 AND 243-ILE--VAL-246</scope>
</reference>
<reference key="17">
    <citation type="journal article" date="2013" name="Proc. Natl. Acad. Sci. U.S.A.">
        <title>Drosophila seminal protein ovulin mediates ovulation through female octopamine neuronal signaling.</title>
        <authorList>
            <person name="Rubinstein C.D."/>
            <person name="Wolfner M.F."/>
        </authorList>
    </citation>
    <scope>FUNCTION</scope>
</reference>
<reference key="18">
    <citation type="journal article" date="2014" name="Genetics">
        <title>A Drosophila protease cascade member, seminal metalloprotease-1, is activated stepwise by male factors and requires female factors for full activity.</title>
        <authorList>
            <person name="Laflamme B.A."/>
            <person name="Avila F.W."/>
            <person name="Michalski K."/>
            <person name="Wolfner M.F."/>
        </authorList>
    </citation>
    <scope>TISSUE SPECIFICITY</scope>
    <scope>PROTEOLYTIC PROCESSING BY SEMP1</scope>
    <scope>PROTEOLYTIC PROCESSING BY SEMP1 (CP1-C AND CP2-C)</scope>
    <scope>CLEAVAGE SITE</scope>
</reference>
<gene>
    <name evidence="17 18" type="primary">Acp26Aa</name>
    <name evidence="16" type="synonym">msp355a</name>
    <name type="synonym">Mst26Aa</name>
    <name evidence="16" type="synonym">mst355a</name>
    <name evidence="14" type="synonym">ovulin</name>
    <name evidence="18" type="ORF">CG8982</name>
</gene>
<organism>
    <name type="scientific">Drosophila melanogaster</name>
    <name type="common">Fruit fly</name>
    <dbReference type="NCBI Taxonomy" id="7227"/>
    <lineage>
        <taxon>Eukaryota</taxon>
        <taxon>Metazoa</taxon>
        <taxon>Ecdysozoa</taxon>
        <taxon>Arthropoda</taxon>
        <taxon>Hexapoda</taxon>
        <taxon>Insecta</taxon>
        <taxon>Pterygota</taxon>
        <taxon>Neoptera</taxon>
        <taxon>Endopterygota</taxon>
        <taxon>Diptera</taxon>
        <taxon>Brachycera</taxon>
        <taxon>Muscomorpha</taxon>
        <taxon>Ephydroidea</taxon>
        <taxon>Drosophilidae</taxon>
        <taxon>Drosophila</taxon>
        <taxon>Sophophora</taxon>
    </lineage>
</organism>